<comment type="function">
    <text evidence="1">One of the primary rRNA binding proteins, it binds directly to 16S rRNA where it nucleates assembly of the head domain of the 30S subunit.</text>
</comment>
<comment type="subunit">
    <text>Part of the 30S ribosomal subunit.</text>
</comment>
<comment type="subcellular location">
    <subcellularLocation>
        <location>Plastid</location>
        <location>Chloroplast</location>
    </subcellularLocation>
</comment>
<comment type="similarity">
    <text evidence="3">Belongs to the universal ribosomal protein uS7 family.</text>
</comment>
<dbReference type="EMBL" id="DQ898156">
    <property type="protein sequence ID" value="ABI32469.1"/>
    <property type="molecule type" value="Genomic_DNA"/>
</dbReference>
<dbReference type="EMBL" id="DQ898156">
    <property type="protein sequence ID" value="ABI32484.1"/>
    <property type="molecule type" value="Genomic_DNA"/>
</dbReference>
<dbReference type="SMR" id="Q0G9Q3"/>
<dbReference type="OMA" id="DDTHRMA"/>
<dbReference type="GO" id="GO:0009507">
    <property type="term" value="C:chloroplast"/>
    <property type="evidence" value="ECO:0007669"/>
    <property type="project" value="UniProtKB-SubCell"/>
</dbReference>
<dbReference type="GO" id="GO:0015935">
    <property type="term" value="C:small ribosomal subunit"/>
    <property type="evidence" value="ECO:0007669"/>
    <property type="project" value="InterPro"/>
</dbReference>
<dbReference type="GO" id="GO:0019843">
    <property type="term" value="F:rRNA binding"/>
    <property type="evidence" value="ECO:0007669"/>
    <property type="project" value="UniProtKB-UniRule"/>
</dbReference>
<dbReference type="GO" id="GO:0003735">
    <property type="term" value="F:structural constituent of ribosome"/>
    <property type="evidence" value="ECO:0007669"/>
    <property type="project" value="InterPro"/>
</dbReference>
<dbReference type="GO" id="GO:0006412">
    <property type="term" value="P:translation"/>
    <property type="evidence" value="ECO:0007669"/>
    <property type="project" value="UniProtKB-UniRule"/>
</dbReference>
<dbReference type="CDD" id="cd14871">
    <property type="entry name" value="uS7_Chloroplast"/>
    <property type="match status" value="1"/>
</dbReference>
<dbReference type="FunFam" id="1.10.455.10:FF:000001">
    <property type="entry name" value="30S ribosomal protein S7"/>
    <property type="match status" value="1"/>
</dbReference>
<dbReference type="Gene3D" id="1.10.455.10">
    <property type="entry name" value="Ribosomal protein S7 domain"/>
    <property type="match status" value="1"/>
</dbReference>
<dbReference type="HAMAP" id="MF_00480_B">
    <property type="entry name" value="Ribosomal_uS7_B"/>
    <property type="match status" value="1"/>
</dbReference>
<dbReference type="InterPro" id="IPR000235">
    <property type="entry name" value="Ribosomal_uS7"/>
</dbReference>
<dbReference type="InterPro" id="IPR005717">
    <property type="entry name" value="Ribosomal_uS7_bac/org-type"/>
</dbReference>
<dbReference type="InterPro" id="IPR020606">
    <property type="entry name" value="Ribosomal_uS7_CS"/>
</dbReference>
<dbReference type="InterPro" id="IPR023798">
    <property type="entry name" value="Ribosomal_uS7_dom"/>
</dbReference>
<dbReference type="InterPro" id="IPR036823">
    <property type="entry name" value="Ribosomal_uS7_dom_sf"/>
</dbReference>
<dbReference type="NCBIfam" id="TIGR01029">
    <property type="entry name" value="rpsG_bact"/>
    <property type="match status" value="1"/>
</dbReference>
<dbReference type="PANTHER" id="PTHR11205">
    <property type="entry name" value="RIBOSOMAL PROTEIN S7"/>
    <property type="match status" value="1"/>
</dbReference>
<dbReference type="Pfam" id="PF00177">
    <property type="entry name" value="Ribosomal_S7"/>
    <property type="match status" value="1"/>
</dbReference>
<dbReference type="PIRSF" id="PIRSF002122">
    <property type="entry name" value="RPS7p_RPS7a_RPS5e_RPS7o"/>
    <property type="match status" value="1"/>
</dbReference>
<dbReference type="SUPFAM" id="SSF47973">
    <property type="entry name" value="Ribosomal protein S7"/>
    <property type="match status" value="1"/>
</dbReference>
<dbReference type="PROSITE" id="PS00052">
    <property type="entry name" value="RIBOSOMAL_S7"/>
    <property type="match status" value="1"/>
</dbReference>
<feature type="chain" id="PRO_0000277037" description="Small ribosomal subunit protein uS7cz/uS7cy">
    <location>
        <begin position="1"/>
        <end position="155"/>
    </location>
</feature>
<geneLocation type="chloroplast"/>
<sequence>MSRRGTAEEKTAKSDPIYRNRLVNMLVNRILKHGKKSLAYQIIYRAVKKIQQKTETNPLSVLRQAIRGVTPDIAVKARRVGGSTHQVPIEIGSTQGKALAIRWLLAASRKRPGRNMAFKLSSELVDAAKGSGDAIRKKEETHRMAEANRAFAHFR</sequence>
<name>RR7_DAUCA</name>
<gene>
    <name type="primary">rps7-A</name>
</gene>
<gene>
    <name type="primary">rps7-B</name>
</gene>
<keyword id="KW-0150">Chloroplast</keyword>
<keyword id="KW-0934">Plastid</keyword>
<keyword id="KW-0687">Ribonucleoprotein</keyword>
<keyword id="KW-0689">Ribosomal protein</keyword>
<keyword id="KW-0694">RNA-binding</keyword>
<keyword id="KW-0699">rRNA-binding</keyword>
<proteinExistence type="inferred from homology"/>
<evidence type="ECO:0000250" key="1"/>
<evidence type="ECO:0000255" key="2">
    <source>
        <dbReference type="HAMAP-Rule" id="MF_00480"/>
    </source>
</evidence>
<evidence type="ECO:0000305" key="3"/>
<accession>Q0G9Q3</accession>
<protein>
    <recommendedName>
        <fullName evidence="2">Small ribosomal subunit protein uS7cz/uS7cy</fullName>
    </recommendedName>
    <alternativeName>
        <fullName>30S ribosomal protein S7, chloroplastic</fullName>
    </alternativeName>
</protein>
<organism>
    <name type="scientific">Daucus carota</name>
    <name type="common">Wild carrot</name>
    <dbReference type="NCBI Taxonomy" id="4039"/>
    <lineage>
        <taxon>Eukaryota</taxon>
        <taxon>Viridiplantae</taxon>
        <taxon>Streptophyta</taxon>
        <taxon>Embryophyta</taxon>
        <taxon>Tracheophyta</taxon>
        <taxon>Spermatophyta</taxon>
        <taxon>Magnoliopsida</taxon>
        <taxon>eudicotyledons</taxon>
        <taxon>Gunneridae</taxon>
        <taxon>Pentapetalae</taxon>
        <taxon>asterids</taxon>
        <taxon>campanulids</taxon>
        <taxon>Apiales</taxon>
        <taxon>Apiaceae</taxon>
        <taxon>Apioideae</taxon>
        <taxon>Scandiceae</taxon>
        <taxon>Daucinae</taxon>
        <taxon>Daucus</taxon>
        <taxon>Daucus sect. Daucus</taxon>
    </lineage>
</organism>
<reference key="1">
    <citation type="journal article" date="2006" name="BMC Genomics">
        <title>Complete plastid genome sequence of Daucus carota: implications for biotechnology and phylogeny of angiosperms.</title>
        <authorList>
            <person name="Ruhlman T."/>
            <person name="Lee S.-B."/>
            <person name="Jansen R.K."/>
            <person name="Hostetler J.B."/>
            <person name="Tallon L.J."/>
            <person name="Town C.D."/>
            <person name="Daniell H."/>
        </authorList>
    </citation>
    <scope>NUCLEOTIDE SEQUENCE [LARGE SCALE GENOMIC DNA]</scope>
    <source>
        <strain>cv. Danvers Half-long</strain>
    </source>
</reference>